<sequence>MTLSRSSADDSTNNANRSYSAVAGTDNKRKRDEDSSDYVGVAESLEMLKKQEIDADHMAASAQQTLISWRSGENSRSLSSSGECSSSNRPESTRLQIFVRMMSGGKTIVIHAEKYDTVEKLHQRIEWKTKIPALEQRVIYKGKQLQRENSLTYYSIEQDASLQLVARMQSTEHPVAWQTIDDIMYTISRMYKGENLQSNINEKIVTFFAMIPVESDESIAKYLNIFSNSSVPAALVMLYASSLERNKSCAKSSVKLFLSNCVALPKNQKNYCLPIVLEFCKLLRKVCPDQKLYVTCRNTLGSMLETFDNPHGVYNDQYETFGVEIFPFFTELTGLLLNELAQNSGPSFCDFQKVSSFWQQLRKVIELKVAFPIPIVLPMQSTALEAEIRHLHRLFGSLLTTMDLCMCRVESSLADKEVGNSETMSSSWSQYLSILKIINSMSNIYQGAKGQLAVMLNKNKVSFSALVVKFAKRGDDHQWIFEYKEATNFEARRHLAMLLFPDVKEDFEEMHEMLIDRSNLLSESFEYIVGASPEALHGGLFMEFKNEEATGPGVLREWFYLVCQEIFNPKNTLFLRSADDFRRFSPNPASKVDPLHPDFFEFTGRVIALALMHKVQVGVLFDRVFFLQLAGLKISLEDIKDTDRIMYNSCKQILEMDPEFFDSNAGLGLTFVLETEELGKRDTIELCPDGKLKAVNSKNRKQYVDLLIERRFATPILEQVKQFSRGFTDMLSHSVPPRSFFKRLYLEDLDGMLRGGENPISIDDWKAHTEYNGFKETDRQIDWFWKILKKMTEEEQRSILFFWTSNKFVPVEGFRGLSSKLYIYRLYEANDRLPLSHTCFYRLCIPRYPTITLMEQRLRLIAQDHVSSSFGKW</sequence>
<evidence type="ECO:0000255" key="1">
    <source>
        <dbReference type="PROSITE-ProRule" id="PRU00104"/>
    </source>
</evidence>
<evidence type="ECO:0000255" key="2">
    <source>
        <dbReference type="PROSITE-ProRule" id="PRU00214"/>
    </source>
</evidence>
<evidence type="ECO:0000256" key="3">
    <source>
        <dbReference type="SAM" id="MobiDB-lite"/>
    </source>
</evidence>
<evidence type="ECO:0000269" key="4">
    <source>
    </source>
</evidence>
<evidence type="ECO:0000305" key="5"/>
<proteinExistence type="evidence at protein level"/>
<comment type="function">
    <text evidence="4">E3 ubiquitin protein ligase that regulates leaf senescence through ubiquitination and subsequent degradation of WRKY53.</text>
</comment>
<comment type="catalytic activity">
    <reaction>
        <text>S-ubiquitinyl-[E2 ubiquitin-conjugating enzyme]-L-cysteine + [acceptor protein]-L-lysine = [E2 ubiquitin-conjugating enzyme]-L-cysteine + N(6)-ubiquitinyl-[acceptor protein]-L-lysine.</text>
        <dbReference type="EC" id="2.3.2.26"/>
    </reaction>
</comment>
<comment type="pathway">
    <text>Protein modification; protein ubiquitination.</text>
</comment>
<comment type="subunit">
    <text evidence="4">Interacts with WRKY53.</text>
</comment>
<comment type="subcellular location">
    <subcellularLocation>
        <location evidence="4">Cytoplasm</location>
    </subcellularLocation>
</comment>
<comment type="induction">
    <text evidence="4">By jasmonate. Down-regulated by hydrogen peroxide.</text>
</comment>
<comment type="disruption phenotype">
    <text evidence="4">Accelerated senescence.</text>
</comment>
<comment type="similarity">
    <text evidence="5">Belongs to the UPL family.</text>
</comment>
<name>UPL5_ARATH</name>
<keyword id="KW-0963">Cytoplasm</keyword>
<keyword id="KW-0430">Lectin</keyword>
<keyword id="KW-1185">Reference proteome</keyword>
<keyword id="KW-0808">Transferase</keyword>
<keyword id="KW-0833">Ubl conjugation pathway</keyword>
<feature type="chain" id="PRO_0000312023" description="E3 ubiquitin-protein ligase UPL5">
    <location>
        <begin position="1"/>
        <end position="873"/>
    </location>
</feature>
<feature type="domain" description="Ubiquitin-like" evidence="2">
    <location>
        <begin position="95"/>
        <end position="171"/>
    </location>
</feature>
<feature type="domain" description="C-type lectin">
    <location>
        <begin position="272"/>
        <end position="296"/>
    </location>
</feature>
<feature type="domain" description="HECT" evidence="1">
    <location>
        <begin position="532"/>
        <end position="873"/>
    </location>
</feature>
<feature type="region of interest" description="Disordered" evidence="3">
    <location>
        <begin position="1"/>
        <end position="37"/>
    </location>
</feature>
<feature type="region of interest" description="Disordered" evidence="3">
    <location>
        <begin position="70"/>
        <end position="90"/>
    </location>
</feature>
<feature type="compositionally biased region" description="Polar residues" evidence="3">
    <location>
        <begin position="1"/>
        <end position="19"/>
    </location>
</feature>
<feature type="active site" description="Glycyl thioester intermediate" evidence="1">
    <location>
        <position position="839"/>
    </location>
</feature>
<feature type="mutagenesis site" description="Loss of E3 ubiquitin ligase activity." evidence="4">
    <original>C</original>
    <variation>S</variation>
    <location>
        <position position="839"/>
    </location>
</feature>
<dbReference type="EC" id="2.3.2.26"/>
<dbReference type="EMBL" id="AL049730">
    <property type="protein sequence ID" value="CAB41727.2"/>
    <property type="molecule type" value="Genomic_DNA"/>
</dbReference>
<dbReference type="EMBL" id="AL161534">
    <property type="protein sequence ID" value="CAB78300.1"/>
    <property type="molecule type" value="Genomic_DNA"/>
</dbReference>
<dbReference type="EMBL" id="CP002687">
    <property type="protein sequence ID" value="AEE83149.1"/>
    <property type="molecule type" value="Genomic_DNA"/>
</dbReference>
<dbReference type="EMBL" id="AK229227">
    <property type="protein sequence ID" value="BAF01094.1"/>
    <property type="molecule type" value="mRNA"/>
</dbReference>
<dbReference type="PIR" id="H85134">
    <property type="entry name" value="H85134"/>
</dbReference>
<dbReference type="PIR" id="T07649">
    <property type="entry name" value="T07649"/>
</dbReference>
<dbReference type="RefSeq" id="NP_192994.1">
    <property type="nucleotide sequence ID" value="NM_117327.3"/>
</dbReference>
<dbReference type="SMR" id="Q9SU29"/>
<dbReference type="FunCoup" id="Q9SU29">
    <property type="interactions" value="1589"/>
</dbReference>
<dbReference type="STRING" id="3702.Q9SU29"/>
<dbReference type="PaxDb" id="3702-AT4G12570.1"/>
<dbReference type="ProteomicsDB" id="234119"/>
<dbReference type="EnsemblPlants" id="AT4G12570.1">
    <property type="protein sequence ID" value="AT4G12570.1"/>
    <property type="gene ID" value="AT4G12570"/>
</dbReference>
<dbReference type="GeneID" id="826870"/>
<dbReference type="Gramene" id="AT4G12570.1">
    <property type="protein sequence ID" value="AT4G12570.1"/>
    <property type="gene ID" value="AT4G12570"/>
</dbReference>
<dbReference type="KEGG" id="ath:AT4G12570"/>
<dbReference type="Araport" id="AT4G12570"/>
<dbReference type="TAIR" id="AT4G12570">
    <property type="gene designation" value="UPL5"/>
</dbReference>
<dbReference type="eggNOG" id="KOG0940">
    <property type="taxonomic scope" value="Eukaryota"/>
</dbReference>
<dbReference type="HOGENOM" id="CLU_002173_8_1_1"/>
<dbReference type="InParanoid" id="Q9SU29"/>
<dbReference type="OMA" id="RWVARSH"/>
<dbReference type="PhylomeDB" id="Q9SU29"/>
<dbReference type="BRENDA" id="2.3.2.26">
    <property type="organism ID" value="399"/>
</dbReference>
<dbReference type="UniPathway" id="UPA00143"/>
<dbReference type="PRO" id="PR:Q9SU29"/>
<dbReference type="Proteomes" id="UP000006548">
    <property type="component" value="Chromosome 4"/>
</dbReference>
<dbReference type="ExpressionAtlas" id="Q9SU29">
    <property type="expression patterns" value="baseline and differential"/>
</dbReference>
<dbReference type="GO" id="GO:0005737">
    <property type="term" value="C:cytoplasm"/>
    <property type="evidence" value="ECO:0000314"/>
    <property type="project" value="TAIR"/>
</dbReference>
<dbReference type="GO" id="GO:0030246">
    <property type="term" value="F:carbohydrate binding"/>
    <property type="evidence" value="ECO:0007669"/>
    <property type="project" value="UniProtKB-KW"/>
</dbReference>
<dbReference type="GO" id="GO:0004842">
    <property type="term" value="F:ubiquitin-protein transferase activity"/>
    <property type="evidence" value="ECO:0000314"/>
    <property type="project" value="TAIR"/>
</dbReference>
<dbReference type="GO" id="GO:0010150">
    <property type="term" value="P:leaf senescence"/>
    <property type="evidence" value="ECO:0000315"/>
    <property type="project" value="TAIR"/>
</dbReference>
<dbReference type="GO" id="GO:0016567">
    <property type="term" value="P:protein ubiquitination"/>
    <property type="evidence" value="ECO:0000314"/>
    <property type="project" value="UniProtKB"/>
</dbReference>
<dbReference type="GO" id="GO:0042542">
    <property type="term" value="P:response to hydrogen peroxide"/>
    <property type="evidence" value="ECO:0000270"/>
    <property type="project" value="UniProtKB"/>
</dbReference>
<dbReference type="GO" id="GO:0009753">
    <property type="term" value="P:response to jasmonic acid"/>
    <property type="evidence" value="ECO:0000270"/>
    <property type="project" value="UniProtKB"/>
</dbReference>
<dbReference type="CDD" id="cd00078">
    <property type="entry name" value="HECTc"/>
    <property type="match status" value="1"/>
</dbReference>
<dbReference type="CDD" id="cd16107">
    <property type="entry name" value="Ubl_AtUPL5_like"/>
    <property type="match status" value="1"/>
</dbReference>
<dbReference type="FunFam" id="3.30.2410.10:FF:000020">
    <property type="entry name" value="E3 ubiquitin-protein ligase UPL5"/>
    <property type="match status" value="1"/>
</dbReference>
<dbReference type="Gene3D" id="3.30.2160.10">
    <property type="entry name" value="Hect, E3 ligase catalytic domain"/>
    <property type="match status" value="1"/>
</dbReference>
<dbReference type="Gene3D" id="3.30.2410.10">
    <property type="entry name" value="Hect, E3 ligase catalytic domain"/>
    <property type="match status" value="1"/>
</dbReference>
<dbReference type="Gene3D" id="3.90.1750.10">
    <property type="entry name" value="Hect, E3 ligase catalytic domains"/>
    <property type="match status" value="1"/>
</dbReference>
<dbReference type="Gene3D" id="3.10.20.90">
    <property type="entry name" value="Phosphatidylinositol 3-kinase Catalytic Subunit, Chain A, domain 1"/>
    <property type="match status" value="1"/>
</dbReference>
<dbReference type="InterPro" id="IPR050409">
    <property type="entry name" value="E3_ubiq-protein_ligase"/>
</dbReference>
<dbReference type="InterPro" id="IPR000569">
    <property type="entry name" value="HECT_dom"/>
</dbReference>
<dbReference type="InterPro" id="IPR035983">
    <property type="entry name" value="Hect_E3_ubiquitin_ligase"/>
</dbReference>
<dbReference type="InterPro" id="IPR000626">
    <property type="entry name" value="Ubiquitin-like_dom"/>
</dbReference>
<dbReference type="InterPro" id="IPR029071">
    <property type="entry name" value="Ubiquitin-like_domsf"/>
</dbReference>
<dbReference type="InterPro" id="IPR019956">
    <property type="entry name" value="Ubiquitin_dom"/>
</dbReference>
<dbReference type="PANTHER" id="PTHR11254:SF424">
    <property type="entry name" value="E3 UBIQUITIN-PROTEIN LIGASE UPL5"/>
    <property type="match status" value="1"/>
</dbReference>
<dbReference type="PANTHER" id="PTHR11254">
    <property type="entry name" value="HECT DOMAIN UBIQUITIN-PROTEIN LIGASE"/>
    <property type="match status" value="1"/>
</dbReference>
<dbReference type="Pfam" id="PF00632">
    <property type="entry name" value="HECT"/>
    <property type="match status" value="1"/>
</dbReference>
<dbReference type="Pfam" id="PF00240">
    <property type="entry name" value="ubiquitin"/>
    <property type="match status" value="1"/>
</dbReference>
<dbReference type="PRINTS" id="PR00348">
    <property type="entry name" value="UBIQUITIN"/>
</dbReference>
<dbReference type="SMART" id="SM00119">
    <property type="entry name" value="HECTc"/>
    <property type="match status" value="1"/>
</dbReference>
<dbReference type="SMART" id="SM00213">
    <property type="entry name" value="UBQ"/>
    <property type="match status" value="1"/>
</dbReference>
<dbReference type="SUPFAM" id="SSF56204">
    <property type="entry name" value="Hect, E3 ligase catalytic domain"/>
    <property type="match status" value="1"/>
</dbReference>
<dbReference type="SUPFAM" id="SSF54236">
    <property type="entry name" value="Ubiquitin-like"/>
    <property type="match status" value="1"/>
</dbReference>
<dbReference type="PROSITE" id="PS00615">
    <property type="entry name" value="C_TYPE_LECTIN_1"/>
    <property type="match status" value="1"/>
</dbReference>
<dbReference type="PROSITE" id="PS50237">
    <property type="entry name" value="HECT"/>
    <property type="match status" value="1"/>
</dbReference>
<dbReference type="PROSITE" id="PS50053">
    <property type="entry name" value="UBIQUITIN_2"/>
    <property type="match status" value="1"/>
</dbReference>
<reference key="1">
    <citation type="journal article" date="1999" name="Nature">
        <title>Sequence and analysis of chromosome 4 of the plant Arabidopsis thaliana.</title>
        <authorList>
            <person name="Mayer K.F.X."/>
            <person name="Schueller C."/>
            <person name="Wambutt R."/>
            <person name="Murphy G."/>
            <person name="Volckaert G."/>
            <person name="Pohl T."/>
            <person name="Duesterhoeft A."/>
            <person name="Stiekema W."/>
            <person name="Entian K.-D."/>
            <person name="Terryn N."/>
            <person name="Harris B."/>
            <person name="Ansorge W."/>
            <person name="Brandt P."/>
            <person name="Grivell L.A."/>
            <person name="Rieger M."/>
            <person name="Weichselgartner M."/>
            <person name="de Simone V."/>
            <person name="Obermaier B."/>
            <person name="Mache R."/>
            <person name="Mueller M."/>
            <person name="Kreis M."/>
            <person name="Delseny M."/>
            <person name="Puigdomenech P."/>
            <person name="Watson M."/>
            <person name="Schmidtheini T."/>
            <person name="Reichert B."/>
            <person name="Portetelle D."/>
            <person name="Perez-Alonso M."/>
            <person name="Boutry M."/>
            <person name="Bancroft I."/>
            <person name="Vos P."/>
            <person name="Hoheisel J."/>
            <person name="Zimmermann W."/>
            <person name="Wedler H."/>
            <person name="Ridley P."/>
            <person name="Langham S.-A."/>
            <person name="McCullagh B."/>
            <person name="Bilham L."/>
            <person name="Robben J."/>
            <person name="van der Schueren J."/>
            <person name="Grymonprez B."/>
            <person name="Chuang Y.-J."/>
            <person name="Vandenbussche F."/>
            <person name="Braeken M."/>
            <person name="Weltjens I."/>
            <person name="Voet M."/>
            <person name="Bastiaens I."/>
            <person name="Aert R."/>
            <person name="Defoor E."/>
            <person name="Weitzenegger T."/>
            <person name="Bothe G."/>
            <person name="Ramsperger U."/>
            <person name="Hilbert H."/>
            <person name="Braun M."/>
            <person name="Holzer E."/>
            <person name="Brandt A."/>
            <person name="Peters S."/>
            <person name="van Staveren M."/>
            <person name="Dirkse W."/>
            <person name="Mooijman P."/>
            <person name="Klein Lankhorst R."/>
            <person name="Rose M."/>
            <person name="Hauf J."/>
            <person name="Koetter P."/>
            <person name="Berneiser S."/>
            <person name="Hempel S."/>
            <person name="Feldpausch M."/>
            <person name="Lamberth S."/>
            <person name="Van den Daele H."/>
            <person name="De Keyser A."/>
            <person name="Buysshaert C."/>
            <person name="Gielen J."/>
            <person name="Villarroel R."/>
            <person name="De Clercq R."/>
            <person name="van Montagu M."/>
            <person name="Rogers J."/>
            <person name="Cronin A."/>
            <person name="Quail M.A."/>
            <person name="Bray-Allen S."/>
            <person name="Clark L."/>
            <person name="Doggett J."/>
            <person name="Hall S."/>
            <person name="Kay M."/>
            <person name="Lennard N."/>
            <person name="McLay K."/>
            <person name="Mayes R."/>
            <person name="Pettett A."/>
            <person name="Rajandream M.A."/>
            <person name="Lyne M."/>
            <person name="Benes V."/>
            <person name="Rechmann S."/>
            <person name="Borkova D."/>
            <person name="Bloecker H."/>
            <person name="Scharfe M."/>
            <person name="Grimm M."/>
            <person name="Loehnert T.-H."/>
            <person name="Dose S."/>
            <person name="de Haan M."/>
            <person name="Maarse A.C."/>
            <person name="Schaefer M."/>
            <person name="Mueller-Auer S."/>
            <person name="Gabel C."/>
            <person name="Fuchs M."/>
            <person name="Fartmann B."/>
            <person name="Granderath K."/>
            <person name="Dauner D."/>
            <person name="Herzl A."/>
            <person name="Neumann S."/>
            <person name="Argiriou A."/>
            <person name="Vitale D."/>
            <person name="Liguori R."/>
            <person name="Piravandi E."/>
            <person name="Massenet O."/>
            <person name="Quigley F."/>
            <person name="Clabauld G."/>
            <person name="Muendlein A."/>
            <person name="Felber R."/>
            <person name="Schnabl S."/>
            <person name="Hiller R."/>
            <person name="Schmidt W."/>
            <person name="Lecharny A."/>
            <person name="Aubourg S."/>
            <person name="Chefdor F."/>
            <person name="Cooke R."/>
            <person name="Berger C."/>
            <person name="Monfort A."/>
            <person name="Casacuberta E."/>
            <person name="Gibbons T."/>
            <person name="Weber N."/>
            <person name="Vandenbol M."/>
            <person name="Bargues M."/>
            <person name="Terol J."/>
            <person name="Torres A."/>
            <person name="Perez-Perez A."/>
            <person name="Purnelle B."/>
            <person name="Bent E."/>
            <person name="Johnson S."/>
            <person name="Tacon D."/>
            <person name="Jesse T."/>
            <person name="Heijnen L."/>
            <person name="Schwarz S."/>
            <person name="Scholler P."/>
            <person name="Heber S."/>
            <person name="Francs P."/>
            <person name="Bielke C."/>
            <person name="Frishman D."/>
            <person name="Haase D."/>
            <person name="Lemcke K."/>
            <person name="Mewes H.-W."/>
            <person name="Stocker S."/>
            <person name="Zaccaria P."/>
            <person name="Bevan M."/>
            <person name="Wilson R.K."/>
            <person name="de la Bastide M."/>
            <person name="Habermann K."/>
            <person name="Parnell L."/>
            <person name="Dedhia N."/>
            <person name="Gnoj L."/>
            <person name="Schutz K."/>
            <person name="Huang E."/>
            <person name="Spiegel L."/>
            <person name="Sekhon M."/>
            <person name="Murray J."/>
            <person name="Sheet P."/>
            <person name="Cordes M."/>
            <person name="Abu-Threideh J."/>
            <person name="Stoneking T."/>
            <person name="Kalicki J."/>
            <person name="Graves T."/>
            <person name="Harmon G."/>
            <person name="Edwards J."/>
            <person name="Latreille P."/>
            <person name="Courtney L."/>
            <person name="Cloud J."/>
            <person name="Abbott A."/>
            <person name="Scott K."/>
            <person name="Johnson D."/>
            <person name="Minx P."/>
            <person name="Bentley D."/>
            <person name="Fulton B."/>
            <person name="Miller N."/>
            <person name="Greco T."/>
            <person name="Kemp K."/>
            <person name="Kramer J."/>
            <person name="Fulton L."/>
            <person name="Mardis E."/>
            <person name="Dante M."/>
            <person name="Pepin K."/>
            <person name="Hillier L.W."/>
            <person name="Nelson J."/>
            <person name="Spieth J."/>
            <person name="Ryan E."/>
            <person name="Andrews S."/>
            <person name="Geisel C."/>
            <person name="Layman D."/>
            <person name="Du H."/>
            <person name="Ali J."/>
            <person name="Berghoff A."/>
            <person name="Jones K."/>
            <person name="Drone K."/>
            <person name="Cotton M."/>
            <person name="Joshu C."/>
            <person name="Antonoiu B."/>
            <person name="Zidanic M."/>
            <person name="Strong C."/>
            <person name="Sun H."/>
            <person name="Lamar B."/>
            <person name="Yordan C."/>
            <person name="Ma P."/>
            <person name="Zhong J."/>
            <person name="Preston R."/>
            <person name="Vil D."/>
            <person name="Shekher M."/>
            <person name="Matero A."/>
            <person name="Shah R."/>
            <person name="Swaby I.K."/>
            <person name="O'Shaughnessy A."/>
            <person name="Rodriguez M."/>
            <person name="Hoffman J."/>
            <person name="Till S."/>
            <person name="Granat S."/>
            <person name="Shohdy N."/>
            <person name="Hasegawa A."/>
            <person name="Hameed A."/>
            <person name="Lodhi M."/>
            <person name="Johnson A."/>
            <person name="Chen E."/>
            <person name="Marra M.A."/>
            <person name="Martienssen R."/>
            <person name="McCombie W.R."/>
        </authorList>
    </citation>
    <scope>NUCLEOTIDE SEQUENCE [LARGE SCALE GENOMIC DNA]</scope>
    <source>
        <strain>cv. Columbia</strain>
    </source>
</reference>
<reference key="2">
    <citation type="journal article" date="2017" name="Plant J.">
        <title>Araport11: a complete reannotation of the Arabidopsis thaliana reference genome.</title>
        <authorList>
            <person name="Cheng C.Y."/>
            <person name="Krishnakumar V."/>
            <person name="Chan A.P."/>
            <person name="Thibaud-Nissen F."/>
            <person name="Schobel S."/>
            <person name="Town C.D."/>
        </authorList>
    </citation>
    <scope>GENOME REANNOTATION</scope>
    <source>
        <strain>cv. Columbia</strain>
    </source>
</reference>
<reference key="3">
    <citation type="submission" date="2006-07" db="EMBL/GenBank/DDBJ databases">
        <title>Large-scale analysis of RIKEN Arabidopsis full-length (RAFL) cDNAs.</title>
        <authorList>
            <person name="Totoki Y."/>
            <person name="Seki M."/>
            <person name="Ishida J."/>
            <person name="Nakajima M."/>
            <person name="Enju A."/>
            <person name="Kamiya A."/>
            <person name="Narusaka M."/>
            <person name="Shin-i T."/>
            <person name="Nakagawa M."/>
            <person name="Sakamoto N."/>
            <person name="Oishi K."/>
            <person name="Kohara Y."/>
            <person name="Kobayashi M."/>
            <person name="Toyoda A."/>
            <person name="Sakaki Y."/>
            <person name="Sakurai T."/>
            <person name="Iida K."/>
            <person name="Akiyama K."/>
            <person name="Satou M."/>
            <person name="Toyoda T."/>
            <person name="Konagaya A."/>
            <person name="Carninci P."/>
            <person name="Kawai J."/>
            <person name="Hayashizaki Y."/>
            <person name="Shinozaki K."/>
        </authorList>
    </citation>
    <scope>NUCLEOTIDE SEQUENCE [LARGE SCALE MRNA]</scope>
    <source>
        <strain>cv. Columbia</strain>
    </source>
</reference>
<reference key="4">
    <citation type="journal article" date="2010" name="Plant J.">
        <title>A HECT E3 ubiquitin ligase negatively regulates Arabidopsis leaf senescence through degradation of the transcription factor WRKY53.</title>
        <authorList>
            <person name="Miao Y."/>
            <person name="Zentgraf U."/>
        </authorList>
    </citation>
    <scope>FUNCTION</scope>
    <scope>INTERACTION WITH WRKY53</scope>
    <scope>SUBCELLULAR LOCATION</scope>
    <scope>INDUCTION</scope>
    <scope>DISRUPTION PHENOTYPE</scope>
    <scope>MUTAGENESIS OF CYS-839</scope>
</reference>
<gene>
    <name type="primary">UPL5</name>
    <name type="ordered locus">At4g12570</name>
    <name type="ORF">T1P17.160</name>
</gene>
<accession>Q9SU29</accession>
<organism>
    <name type="scientific">Arabidopsis thaliana</name>
    <name type="common">Mouse-ear cress</name>
    <dbReference type="NCBI Taxonomy" id="3702"/>
    <lineage>
        <taxon>Eukaryota</taxon>
        <taxon>Viridiplantae</taxon>
        <taxon>Streptophyta</taxon>
        <taxon>Embryophyta</taxon>
        <taxon>Tracheophyta</taxon>
        <taxon>Spermatophyta</taxon>
        <taxon>Magnoliopsida</taxon>
        <taxon>eudicotyledons</taxon>
        <taxon>Gunneridae</taxon>
        <taxon>Pentapetalae</taxon>
        <taxon>rosids</taxon>
        <taxon>malvids</taxon>
        <taxon>Brassicales</taxon>
        <taxon>Brassicaceae</taxon>
        <taxon>Camelineae</taxon>
        <taxon>Arabidopsis</taxon>
    </lineage>
</organism>
<protein>
    <recommendedName>
        <fullName>E3 ubiquitin-protein ligase UPL5</fullName>
        <shortName>Ubiquitin-protein ligase 5</shortName>
        <ecNumber>2.3.2.26</ecNumber>
    </recommendedName>
    <alternativeName>
        <fullName>HECT-type E3 ubiquitin transferase UPL5</fullName>
    </alternativeName>
</protein>